<reference key="1">
    <citation type="journal article" date="2002" name="Proc. Natl. Acad. Sci. U.S.A.">
        <title>The genome sequence of Bifidobacterium longum reflects its adaptation to the human gastrointestinal tract.</title>
        <authorList>
            <person name="Schell M.A."/>
            <person name="Karmirantzou M."/>
            <person name="Snel B."/>
            <person name="Vilanova D."/>
            <person name="Berger B."/>
            <person name="Pessi G."/>
            <person name="Zwahlen M.-C."/>
            <person name="Desiere F."/>
            <person name="Bork P."/>
            <person name="Delley M."/>
            <person name="Pridmore R.D."/>
            <person name="Arigoni F."/>
        </authorList>
    </citation>
    <scope>NUCLEOTIDE SEQUENCE [LARGE SCALE GENOMIC DNA]</scope>
    <source>
        <strain>NCC 2705</strain>
    </source>
</reference>
<evidence type="ECO:0000255" key="1">
    <source>
        <dbReference type="HAMAP-Rule" id="MF_01420"/>
    </source>
</evidence>
<protein>
    <recommendedName>
        <fullName evidence="1">Probable cell division protein WhiA</fullName>
    </recommendedName>
</protein>
<gene>
    <name evidence="1" type="primary">whiA</name>
    <name type="ordered locus">BL0706</name>
</gene>
<feature type="chain" id="PRO_0000376448" description="Probable cell division protein WhiA">
    <location>
        <begin position="1"/>
        <end position="316"/>
    </location>
</feature>
<feature type="DNA-binding region" description="H-T-H motif" evidence="1">
    <location>
        <begin position="276"/>
        <end position="309"/>
    </location>
</feature>
<accession>Q8G6D7</accession>
<dbReference type="EMBL" id="AE014295">
    <property type="protein sequence ID" value="AAN24525.1"/>
    <property type="molecule type" value="Genomic_DNA"/>
</dbReference>
<dbReference type="RefSeq" id="NP_695889.1">
    <property type="nucleotide sequence ID" value="NC_004307.2"/>
</dbReference>
<dbReference type="RefSeq" id="WP_007052782.1">
    <property type="nucleotide sequence ID" value="NC_004307.2"/>
</dbReference>
<dbReference type="SMR" id="Q8G6D7"/>
<dbReference type="STRING" id="206672.BL0706"/>
<dbReference type="EnsemblBacteria" id="AAN24525">
    <property type="protein sequence ID" value="AAN24525"/>
    <property type="gene ID" value="BL0706"/>
</dbReference>
<dbReference type="GeneID" id="69578330"/>
<dbReference type="KEGG" id="blo:BL0706"/>
<dbReference type="PATRIC" id="fig|206672.9.peg.405"/>
<dbReference type="HOGENOM" id="CLU_053282_0_0_11"/>
<dbReference type="OrthoDB" id="5197218at2"/>
<dbReference type="PhylomeDB" id="Q8G6D7"/>
<dbReference type="Proteomes" id="UP000000439">
    <property type="component" value="Chromosome"/>
</dbReference>
<dbReference type="GO" id="GO:0003677">
    <property type="term" value="F:DNA binding"/>
    <property type="evidence" value="ECO:0007669"/>
    <property type="project" value="UniProtKB-UniRule"/>
</dbReference>
<dbReference type="GO" id="GO:0051301">
    <property type="term" value="P:cell division"/>
    <property type="evidence" value="ECO:0007669"/>
    <property type="project" value="UniProtKB-UniRule"/>
</dbReference>
<dbReference type="GO" id="GO:0043937">
    <property type="term" value="P:regulation of sporulation"/>
    <property type="evidence" value="ECO:0007669"/>
    <property type="project" value="InterPro"/>
</dbReference>
<dbReference type="Gene3D" id="3.10.28.10">
    <property type="entry name" value="Homing endonucleases"/>
    <property type="match status" value="1"/>
</dbReference>
<dbReference type="HAMAP" id="MF_01420">
    <property type="entry name" value="HTH_type_WhiA"/>
    <property type="match status" value="1"/>
</dbReference>
<dbReference type="InterPro" id="IPR027434">
    <property type="entry name" value="Homing_endonucl"/>
</dbReference>
<dbReference type="InterPro" id="IPR018478">
    <property type="entry name" value="Sporu_reg_WhiA_N_dom"/>
</dbReference>
<dbReference type="InterPro" id="IPR003802">
    <property type="entry name" value="Sporulation_regulator_WhiA"/>
</dbReference>
<dbReference type="InterPro" id="IPR023054">
    <property type="entry name" value="Sporulation_regulator_WhiA_C"/>
</dbReference>
<dbReference type="InterPro" id="IPR039518">
    <property type="entry name" value="WhiA_LAGLIDADG_dom"/>
</dbReference>
<dbReference type="NCBIfam" id="TIGR00647">
    <property type="entry name" value="DNA_bind_WhiA"/>
    <property type="match status" value="1"/>
</dbReference>
<dbReference type="PANTHER" id="PTHR37307">
    <property type="entry name" value="CELL DIVISION PROTEIN WHIA-RELATED"/>
    <property type="match status" value="1"/>
</dbReference>
<dbReference type="PANTHER" id="PTHR37307:SF1">
    <property type="entry name" value="CELL DIVISION PROTEIN WHIA-RELATED"/>
    <property type="match status" value="1"/>
</dbReference>
<dbReference type="Pfam" id="PF02650">
    <property type="entry name" value="HTH_WhiA"/>
    <property type="match status" value="1"/>
</dbReference>
<dbReference type="Pfam" id="PF14527">
    <property type="entry name" value="LAGLIDADG_WhiA"/>
    <property type="match status" value="1"/>
</dbReference>
<dbReference type="Pfam" id="PF10298">
    <property type="entry name" value="WhiA_N"/>
    <property type="match status" value="1"/>
</dbReference>
<keyword id="KW-0131">Cell cycle</keyword>
<keyword id="KW-0132">Cell division</keyword>
<keyword id="KW-0238">DNA-binding</keyword>
<keyword id="KW-1185">Reference proteome</keyword>
<sequence>MALLDDVKSELAAFEGDSPAAIKAQAAAMIRFGGGLRPVQNTYVIQAVFTSLDVAEWLKNTLRNTFGHEAEVNHLTRQTPNGPVETYVVLVTRNVVALALQTGLVDRRKQQVRGLPSEVVNGSIAQIKAAWRGAFMARGFLSDPGKASFLEIACPTEEAAMALCGVARRLGIQAKHRTLRSSERVTLKDPDAIERMLKLMGATRSAREWTGKRSDGEARGKANRLANFDDANMRRSAKAAAEASEKVQHAFEVLGDNIPDNLRQAGQLRIDHVDKSLEELGKIAEPQITKDAIAGRIRRLLQLAEKTEKARAAEGK</sequence>
<organism>
    <name type="scientific">Bifidobacterium longum (strain NCC 2705)</name>
    <dbReference type="NCBI Taxonomy" id="206672"/>
    <lineage>
        <taxon>Bacteria</taxon>
        <taxon>Bacillati</taxon>
        <taxon>Actinomycetota</taxon>
        <taxon>Actinomycetes</taxon>
        <taxon>Bifidobacteriales</taxon>
        <taxon>Bifidobacteriaceae</taxon>
        <taxon>Bifidobacterium</taxon>
    </lineage>
</organism>
<proteinExistence type="inferred from homology"/>
<comment type="function">
    <text evidence="1">Involved in cell division and chromosome segregation.</text>
</comment>
<comment type="similarity">
    <text evidence="1">Belongs to the WhiA family.</text>
</comment>
<name>WHIA_BIFLO</name>